<feature type="chain" id="PRO_0000189101" description="1-deoxy-D-xylulose-5-phosphate synthase">
    <location>
        <begin position="1"/>
        <end position="644"/>
    </location>
</feature>
<feature type="binding site" evidence="1">
    <location>
        <position position="78"/>
    </location>
    <ligand>
        <name>thiamine diphosphate</name>
        <dbReference type="ChEBI" id="CHEBI:58937"/>
    </ligand>
</feature>
<feature type="binding site" evidence="1">
    <location>
        <begin position="120"/>
        <end position="122"/>
    </location>
    <ligand>
        <name>thiamine diphosphate</name>
        <dbReference type="ChEBI" id="CHEBI:58937"/>
    </ligand>
</feature>
<feature type="binding site" evidence="1">
    <location>
        <position position="150"/>
    </location>
    <ligand>
        <name>Mg(2+)</name>
        <dbReference type="ChEBI" id="CHEBI:18420"/>
    </ligand>
</feature>
<feature type="binding site" evidence="1">
    <location>
        <begin position="151"/>
        <end position="152"/>
    </location>
    <ligand>
        <name>thiamine diphosphate</name>
        <dbReference type="ChEBI" id="CHEBI:58937"/>
    </ligand>
</feature>
<feature type="binding site" evidence="1">
    <location>
        <position position="179"/>
    </location>
    <ligand>
        <name>Mg(2+)</name>
        <dbReference type="ChEBI" id="CHEBI:18420"/>
    </ligand>
</feature>
<feature type="binding site" evidence="1">
    <location>
        <position position="179"/>
    </location>
    <ligand>
        <name>thiamine diphosphate</name>
        <dbReference type="ChEBI" id="CHEBI:58937"/>
    </ligand>
</feature>
<feature type="binding site" evidence="1">
    <location>
        <position position="374"/>
    </location>
    <ligand>
        <name>thiamine diphosphate</name>
        <dbReference type="ChEBI" id="CHEBI:58937"/>
    </ligand>
</feature>
<accession>Q9Z6J9</accession>
<dbReference type="EC" id="2.2.1.7" evidence="1"/>
<dbReference type="EMBL" id="AE001363">
    <property type="protein sequence ID" value="AAD19197.1"/>
    <property type="molecule type" value="Genomic_DNA"/>
</dbReference>
<dbReference type="EMBL" id="AE002161">
    <property type="protein sequence ID" value="AAF38589.1"/>
    <property type="molecule type" value="Genomic_DNA"/>
</dbReference>
<dbReference type="EMBL" id="BA000008">
    <property type="protein sequence ID" value="BAA99267.1"/>
    <property type="molecule type" value="Genomic_DNA"/>
</dbReference>
<dbReference type="EMBL" id="AE009440">
    <property type="protein sequence ID" value="AAP99030.1"/>
    <property type="molecule type" value="Genomic_DNA"/>
</dbReference>
<dbReference type="PIR" id="A72002">
    <property type="entry name" value="A72002"/>
</dbReference>
<dbReference type="PIR" id="A86623">
    <property type="entry name" value="A86623"/>
</dbReference>
<dbReference type="RefSeq" id="NP_225254.1">
    <property type="nucleotide sequence ID" value="NC_000922.1"/>
</dbReference>
<dbReference type="RefSeq" id="WP_010883693.1">
    <property type="nucleotide sequence ID" value="NZ_LN847257.1"/>
</dbReference>
<dbReference type="SMR" id="Q9Z6J9"/>
<dbReference type="STRING" id="406984.CPK_ORF00484"/>
<dbReference type="GeneID" id="45051118"/>
<dbReference type="KEGG" id="cpa:CP_0790"/>
<dbReference type="KEGG" id="cpj:tktB_2"/>
<dbReference type="KEGG" id="cpn:CPn_1060"/>
<dbReference type="KEGG" id="cpt:CpB1102"/>
<dbReference type="PATRIC" id="fig|115713.3.peg.1159"/>
<dbReference type="eggNOG" id="COG1154">
    <property type="taxonomic scope" value="Bacteria"/>
</dbReference>
<dbReference type="HOGENOM" id="CLU_009227_1_4_0"/>
<dbReference type="OrthoDB" id="9803371at2"/>
<dbReference type="UniPathway" id="UPA00064">
    <property type="reaction ID" value="UER00091"/>
</dbReference>
<dbReference type="Proteomes" id="UP000000583">
    <property type="component" value="Chromosome"/>
</dbReference>
<dbReference type="Proteomes" id="UP000000801">
    <property type="component" value="Chromosome"/>
</dbReference>
<dbReference type="GO" id="GO:0005829">
    <property type="term" value="C:cytosol"/>
    <property type="evidence" value="ECO:0007669"/>
    <property type="project" value="TreeGrafter"/>
</dbReference>
<dbReference type="GO" id="GO:0008661">
    <property type="term" value="F:1-deoxy-D-xylulose-5-phosphate synthase activity"/>
    <property type="evidence" value="ECO:0007669"/>
    <property type="project" value="UniProtKB-UniRule"/>
</dbReference>
<dbReference type="GO" id="GO:0000287">
    <property type="term" value="F:magnesium ion binding"/>
    <property type="evidence" value="ECO:0007669"/>
    <property type="project" value="UniProtKB-UniRule"/>
</dbReference>
<dbReference type="GO" id="GO:0030976">
    <property type="term" value="F:thiamine pyrophosphate binding"/>
    <property type="evidence" value="ECO:0007669"/>
    <property type="project" value="UniProtKB-UniRule"/>
</dbReference>
<dbReference type="GO" id="GO:0052865">
    <property type="term" value="P:1-deoxy-D-xylulose 5-phosphate biosynthetic process"/>
    <property type="evidence" value="ECO:0007669"/>
    <property type="project" value="UniProtKB-UniPathway"/>
</dbReference>
<dbReference type="GO" id="GO:0019288">
    <property type="term" value="P:isopentenyl diphosphate biosynthetic process, methylerythritol 4-phosphate pathway"/>
    <property type="evidence" value="ECO:0007669"/>
    <property type="project" value="TreeGrafter"/>
</dbReference>
<dbReference type="GO" id="GO:0016114">
    <property type="term" value="P:terpenoid biosynthetic process"/>
    <property type="evidence" value="ECO:0007669"/>
    <property type="project" value="UniProtKB-UniRule"/>
</dbReference>
<dbReference type="GO" id="GO:0009228">
    <property type="term" value="P:thiamine biosynthetic process"/>
    <property type="evidence" value="ECO:0007669"/>
    <property type="project" value="UniProtKB-UniRule"/>
</dbReference>
<dbReference type="CDD" id="cd02007">
    <property type="entry name" value="TPP_DXS"/>
    <property type="match status" value="1"/>
</dbReference>
<dbReference type="CDD" id="cd07033">
    <property type="entry name" value="TPP_PYR_DXS_TK_like"/>
    <property type="match status" value="1"/>
</dbReference>
<dbReference type="Gene3D" id="3.40.50.920">
    <property type="match status" value="1"/>
</dbReference>
<dbReference type="Gene3D" id="3.40.50.970">
    <property type="match status" value="2"/>
</dbReference>
<dbReference type="HAMAP" id="MF_00315">
    <property type="entry name" value="DXP_synth"/>
    <property type="match status" value="1"/>
</dbReference>
<dbReference type="InterPro" id="IPR005477">
    <property type="entry name" value="Dxylulose-5-P_synthase"/>
</dbReference>
<dbReference type="InterPro" id="IPR029061">
    <property type="entry name" value="THDP-binding"/>
</dbReference>
<dbReference type="InterPro" id="IPR009014">
    <property type="entry name" value="Transketo_C/PFOR_II"/>
</dbReference>
<dbReference type="InterPro" id="IPR005475">
    <property type="entry name" value="Transketolase-like_Pyr-bd"/>
</dbReference>
<dbReference type="InterPro" id="IPR033248">
    <property type="entry name" value="Transketolase_C"/>
</dbReference>
<dbReference type="InterPro" id="IPR049557">
    <property type="entry name" value="Transketolase_CS"/>
</dbReference>
<dbReference type="NCBIfam" id="TIGR00204">
    <property type="entry name" value="dxs"/>
    <property type="match status" value="1"/>
</dbReference>
<dbReference type="NCBIfam" id="NF003933">
    <property type="entry name" value="PRK05444.2-2"/>
    <property type="match status" value="1"/>
</dbReference>
<dbReference type="PANTHER" id="PTHR43322">
    <property type="entry name" value="1-D-DEOXYXYLULOSE 5-PHOSPHATE SYNTHASE-RELATED"/>
    <property type="match status" value="1"/>
</dbReference>
<dbReference type="PANTHER" id="PTHR43322:SF5">
    <property type="entry name" value="1-DEOXY-D-XYLULOSE-5-PHOSPHATE SYNTHASE, CHLOROPLASTIC"/>
    <property type="match status" value="1"/>
</dbReference>
<dbReference type="Pfam" id="PF13292">
    <property type="entry name" value="DXP_synthase_N"/>
    <property type="match status" value="1"/>
</dbReference>
<dbReference type="Pfam" id="PF02779">
    <property type="entry name" value="Transket_pyr"/>
    <property type="match status" value="1"/>
</dbReference>
<dbReference type="Pfam" id="PF02780">
    <property type="entry name" value="Transketolase_C"/>
    <property type="match status" value="1"/>
</dbReference>
<dbReference type="SMART" id="SM00861">
    <property type="entry name" value="Transket_pyr"/>
    <property type="match status" value="1"/>
</dbReference>
<dbReference type="SUPFAM" id="SSF52518">
    <property type="entry name" value="Thiamin diphosphate-binding fold (THDP-binding)"/>
    <property type="match status" value="2"/>
</dbReference>
<dbReference type="SUPFAM" id="SSF52922">
    <property type="entry name" value="TK C-terminal domain-like"/>
    <property type="match status" value="1"/>
</dbReference>
<dbReference type="PROSITE" id="PS00801">
    <property type="entry name" value="TRANSKETOLASE_1"/>
    <property type="match status" value="1"/>
</dbReference>
<reference key="1">
    <citation type="journal article" date="1999" name="Nat. Genet.">
        <title>Comparative genomes of Chlamydia pneumoniae and C. trachomatis.</title>
        <authorList>
            <person name="Kalman S."/>
            <person name="Mitchell W.P."/>
            <person name="Marathe R."/>
            <person name="Lammel C.J."/>
            <person name="Fan J."/>
            <person name="Hyman R.W."/>
            <person name="Olinger L."/>
            <person name="Grimwood J."/>
            <person name="Davis R.W."/>
            <person name="Stephens R.S."/>
        </authorList>
    </citation>
    <scope>NUCLEOTIDE SEQUENCE [LARGE SCALE GENOMIC DNA]</scope>
    <source>
        <strain>CWL029</strain>
    </source>
</reference>
<reference key="2">
    <citation type="journal article" date="2000" name="Nucleic Acids Res.">
        <title>Genome sequences of Chlamydia trachomatis MoPn and Chlamydia pneumoniae AR39.</title>
        <authorList>
            <person name="Read T.D."/>
            <person name="Brunham R.C."/>
            <person name="Shen C."/>
            <person name="Gill S.R."/>
            <person name="Heidelberg J.F."/>
            <person name="White O."/>
            <person name="Hickey E.K."/>
            <person name="Peterson J.D."/>
            <person name="Utterback T.R."/>
            <person name="Berry K.J."/>
            <person name="Bass S."/>
            <person name="Linher K.D."/>
            <person name="Weidman J.F."/>
            <person name="Khouri H.M."/>
            <person name="Craven B."/>
            <person name="Bowman C."/>
            <person name="Dodson R.J."/>
            <person name="Gwinn M.L."/>
            <person name="Nelson W.C."/>
            <person name="DeBoy R.T."/>
            <person name="Kolonay J.F."/>
            <person name="McClarty G."/>
            <person name="Salzberg S.L."/>
            <person name="Eisen J.A."/>
            <person name="Fraser C.M."/>
        </authorList>
    </citation>
    <scope>NUCLEOTIDE SEQUENCE [LARGE SCALE GENOMIC DNA]</scope>
    <source>
        <strain>AR39</strain>
    </source>
</reference>
<reference key="3">
    <citation type="journal article" date="2000" name="Nucleic Acids Res.">
        <title>Comparison of whole genome sequences of Chlamydia pneumoniae J138 from Japan and CWL029 from USA.</title>
        <authorList>
            <person name="Shirai M."/>
            <person name="Hirakawa H."/>
            <person name="Kimoto M."/>
            <person name="Tabuchi M."/>
            <person name="Kishi F."/>
            <person name="Ouchi K."/>
            <person name="Shiba T."/>
            <person name="Ishii K."/>
            <person name="Hattori M."/>
            <person name="Kuhara S."/>
            <person name="Nakazawa T."/>
        </authorList>
    </citation>
    <scope>NUCLEOTIDE SEQUENCE [LARGE SCALE GENOMIC DNA]</scope>
    <source>
        <strain>J138</strain>
    </source>
</reference>
<reference key="4">
    <citation type="submission" date="2002-05" db="EMBL/GenBank/DDBJ databases">
        <title>The genome sequence of Chlamydia pneumoniae TW183 and comparison with other Chlamydia strains based on whole genome sequence analysis.</title>
        <authorList>
            <person name="Geng M.M."/>
            <person name="Schuhmacher A."/>
            <person name="Muehldorfer I."/>
            <person name="Bensch K.W."/>
            <person name="Schaefer K.P."/>
            <person name="Schneider S."/>
            <person name="Pohl T."/>
            <person name="Essig A."/>
            <person name="Marre R."/>
            <person name="Melchers K."/>
        </authorList>
    </citation>
    <scope>NUCLEOTIDE SEQUENCE [LARGE SCALE GENOMIC DNA]</scope>
    <source>
        <strain>TW-183</strain>
    </source>
</reference>
<keyword id="KW-0414">Isoprene biosynthesis</keyword>
<keyword id="KW-0460">Magnesium</keyword>
<keyword id="KW-0479">Metal-binding</keyword>
<keyword id="KW-0784">Thiamine biosynthesis</keyword>
<keyword id="KW-0786">Thiamine pyrophosphate</keyword>
<keyword id="KW-0808">Transferase</keyword>
<sequence length="644" mass="70892">MTSSSCPLLDLILSPADLKKLSISQLPGLAEEIRYRIISVLSQTGGHLSSNLGIVELTIALHYVFSSPKDKFIFDVGHQTYPHKLLTGRNNEGFDHIRNDNGLSGFTNPTESDHDLFFSGHAGTALSLALGMAQTTPLESRTHVIPILGDAAFSCGLTLEALNNISTDLSKFVVILNDNNMSISKNVGAMSRIFSRWLHHPATNKLTKQVEKWLAKIPRYGDSLAKHSRRLSQCVKNLFCPTPLFEQFGLAYVGPIDGHNVKKLIPILQSVRNLPFPILVHVCTTKGKGLDQAQNNPAKYHGVRANFNKRESAKHLPAIKPKPSFPDIFGQTLCELGEVSSRLHVVTPAMSIGSRLEGFKQKFPERFFDVGIAEGHAVTFSAGIAKAGNPVICSIYSTFLHRALDNVFHDVCMQDLPVIFAIDRAGLAYGDGRSHHGIYDMSFLRAMPQMIICQPRSQVVFQQLLYSSLHWSSPSAIRYPNIPAPHGDPLTGDPNFLRSPGNAETLSQGEDVLIIALGTLCFTALSIKHQLLAYGISATVVDPIFIKPFDNDLFSLLLMSHSKVITIEEHSIRGGLASEFNNFVATFNFKVDILNFAIPDTFLSHGSKEALTKSIGLDESSMTNRILTHFNFRSKKQTVGDVRV</sequence>
<name>DXS_CHLPN</name>
<organism>
    <name type="scientific">Chlamydia pneumoniae</name>
    <name type="common">Chlamydophila pneumoniae</name>
    <dbReference type="NCBI Taxonomy" id="83558"/>
    <lineage>
        <taxon>Bacteria</taxon>
        <taxon>Pseudomonadati</taxon>
        <taxon>Chlamydiota</taxon>
        <taxon>Chlamydiia</taxon>
        <taxon>Chlamydiales</taxon>
        <taxon>Chlamydiaceae</taxon>
        <taxon>Chlamydia/Chlamydophila group</taxon>
        <taxon>Chlamydia</taxon>
    </lineage>
</organism>
<protein>
    <recommendedName>
        <fullName evidence="1">1-deoxy-D-xylulose-5-phosphate synthase</fullName>
        <ecNumber evidence="1">2.2.1.7</ecNumber>
    </recommendedName>
    <alternativeName>
        <fullName evidence="1">1-deoxyxylulose-5-phosphate synthase</fullName>
        <shortName evidence="1">DXP synthase</shortName>
        <shortName evidence="1">DXPS</shortName>
    </alternativeName>
</protein>
<proteinExistence type="inferred from homology"/>
<comment type="function">
    <text evidence="1">Catalyzes the acyloin condensation reaction between C atoms 2 and 3 of pyruvate and glyceraldehyde 3-phosphate to yield 1-deoxy-D-xylulose-5-phosphate (DXP).</text>
</comment>
<comment type="catalytic activity">
    <reaction evidence="1">
        <text>D-glyceraldehyde 3-phosphate + pyruvate + H(+) = 1-deoxy-D-xylulose 5-phosphate + CO2</text>
        <dbReference type="Rhea" id="RHEA:12605"/>
        <dbReference type="ChEBI" id="CHEBI:15361"/>
        <dbReference type="ChEBI" id="CHEBI:15378"/>
        <dbReference type="ChEBI" id="CHEBI:16526"/>
        <dbReference type="ChEBI" id="CHEBI:57792"/>
        <dbReference type="ChEBI" id="CHEBI:59776"/>
        <dbReference type="EC" id="2.2.1.7"/>
    </reaction>
</comment>
<comment type="cofactor">
    <cofactor evidence="1">
        <name>Mg(2+)</name>
        <dbReference type="ChEBI" id="CHEBI:18420"/>
    </cofactor>
    <text evidence="1">Binds 1 Mg(2+) ion per subunit.</text>
</comment>
<comment type="cofactor">
    <cofactor evidence="1">
        <name>thiamine diphosphate</name>
        <dbReference type="ChEBI" id="CHEBI:58937"/>
    </cofactor>
    <text evidence="1">Binds 1 thiamine pyrophosphate per subunit.</text>
</comment>
<comment type="pathway">
    <text evidence="1">Metabolic intermediate biosynthesis; 1-deoxy-D-xylulose 5-phosphate biosynthesis; 1-deoxy-D-xylulose 5-phosphate from D-glyceraldehyde 3-phosphate and pyruvate: step 1/1.</text>
</comment>
<comment type="subunit">
    <text evidence="1">Homodimer.</text>
</comment>
<comment type="similarity">
    <text evidence="1">Belongs to the transketolase family. DXPS subfamily.</text>
</comment>
<gene>
    <name evidence="1" type="primary">dxs</name>
    <name type="ordered locus">CPn_1060</name>
    <name type="ordered locus">CP_0790</name>
    <name type="ordered locus">CpB1102</name>
</gene>
<evidence type="ECO:0000255" key="1">
    <source>
        <dbReference type="HAMAP-Rule" id="MF_00315"/>
    </source>
</evidence>